<organism>
    <name type="scientific">Legionella pneumophila (strain Lens)</name>
    <dbReference type="NCBI Taxonomy" id="297245"/>
    <lineage>
        <taxon>Bacteria</taxon>
        <taxon>Pseudomonadati</taxon>
        <taxon>Pseudomonadota</taxon>
        <taxon>Gammaproteobacteria</taxon>
        <taxon>Legionellales</taxon>
        <taxon>Legionellaceae</taxon>
        <taxon>Legionella</taxon>
    </lineage>
</organism>
<comment type="function">
    <text evidence="1">The RuvA-RuvB-RuvC complex processes Holliday junction (HJ) DNA during genetic recombination and DNA repair. Endonuclease that resolves HJ intermediates. Cleaves cruciform DNA by making single-stranded nicks across the HJ at symmetrical positions within the homologous arms, yielding a 5'-phosphate and a 3'-hydroxyl group; requires a central core of homology in the junction. The consensus cleavage sequence is 5'-(A/T)TT(C/G)-3'. Cleavage occurs on the 3'-side of the TT dinucleotide at the point of strand exchange. HJ branch migration catalyzed by RuvA-RuvB allows RuvC to scan DNA until it finds its consensus sequence, where it cleaves and resolves the cruciform DNA.</text>
</comment>
<comment type="catalytic activity">
    <reaction evidence="1">
        <text>Endonucleolytic cleavage at a junction such as a reciprocal single-stranded crossover between two homologous DNA duplexes (Holliday junction).</text>
        <dbReference type="EC" id="3.1.21.10"/>
    </reaction>
</comment>
<comment type="cofactor">
    <cofactor evidence="1">
        <name>Mg(2+)</name>
        <dbReference type="ChEBI" id="CHEBI:18420"/>
    </cofactor>
    <text evidence="1">Binds 2 Mg(2+) ion per subunit.</text>
</comment>
<comment type="subunit">
    <text evidence="1">Homodimer which binds Holliday junction (HJ) DNA. The HJ becomes 2-fold symmetrical on binding to RuvC with unstacked arms; it has a different conformation from HJ DNA in complex with RuvA. In the full resolvosome a probable DNA-RuvA(4)-RuvB(12)-RuvC(2) complex forms which resolves the HJ.</text>
</comment>
<comment type="subcellular location">
    <subcellularLocation>
        <location evidence="1">Cytoplasm</location>
    </subcellularLocation>
</comment>
<comment type="similarity">
    <text evidence="1">Belongs to the RuvC family.</text>
</comment>
<keyword id="KW-0963">Cytoplasm</keyword>
<keyword id="KW-0227">DNA damage</keyword>
<keyword id="KW-0233">DNA recombination</keyword>
<keyword id="KW-0234">DNA repair</keyword>
<keyword id="KW-0238">DNA-binding</keyword>
<keyword id="KW-0255">Endonuclease</keyword>
<keyword id="KW-0378">Hydrolase</keyword>
<keyword id="KW-0460">Magnesium</keyword>
<keyword id="KW-0479">Metal-binding</keyword>
<keyword id="KW-0540">Nuclease</keyword>
<sequence length="174" mass="19197">MTIILGIDPGSRVTGYGLIKESDRKIAYIDSGCIRTSNDVELSHKLLQIYDGICELMDHYSPTEVAIEQIFMHNNPNSALKLGHARGVAMVAAASHRVKICEYSAREIKQSVVGYGAAEKDQVSHMVVELLQLNRAPQKDAADALAIAICHSHMRNGLSKLIGSRGTKRRRMRL</sequence>
<gene>
    <name evidence="1" type="primary">ruvC</name>
    <name type="ordered locus">lpl1250</name>
</gene>
<name>RUVC_LEGPL</name>
<evidence type="ECO:0000255" key="1">
    <source>
        <dbReference type="HAMAP-Rule" id="MF_00034"/>
    </source>
</evidence>
<protein>
    <recommendedName>
        <fullName evidence="1">Crossover junction endodeoxyribonuclease RuvC</fullName>
        <ecNumber evidence="1">3.1.21.10</ecNumber>
    </recommendedName>
    <alternativeName>
        <fullName evidence="1">Holliday junction nuclease RuvC</fullName>
    </alternativeName>
    <alternativeName>
        <fullName evidence="1">Holliday junction resolvase RuvC</fullName>
    </alternativeName>
</protein>
<feature type="chain" id="PRO_0000225149" description="Crossover junction endodeoxyribonuclease RuvC">
    <location>
        <begin position="1"/>
        <end position="174"/>
    </location>
</feature>
<feature type="active site" evidence="1">
    <location>
        <position position="8"/>
    </location>
</feature>
<feature type="active site" evidence="1">
    <location>
        <position position="68"/>
    </location>
</feature>
<feature type="active site" evidence="1">
    <location>
        <position position="140"/>
    </location>
</feature>
<feature type="binding site" evidence="1">
    <location>
        <position position="8"/>
    </location>
    <ligand>
        <name>Mg(2+)</name>
        <dbReference type="ChEBI" id="CHEBI:18420"/>
        <label>1</label>
    </ligand>
</feature>
<feature type="binding site" evidence="1">
    <location>
        <position position="68"/>
    </location>
    <ligand>
        <name>Mg(2+)</name>
        <dbReference type="ChEBI" id="CHEBI:18420"/>
        <label>2</label>
    </ligand>
</feature>
<feature type="binding site" evidence="1">
    <location>
        <position position="140"/>
    </location>
    <ligand>
        <name>Mg(2+)</name>
        <dbReference type="ChEBI" id="CHEBI:18420"/>
        <label>1</label>
    </ligand>
</feature>
<reference key="1">
    <citation type="journal article" date="2004" name="Nat. Genet.">
        <title>Evidence in the Legionella pneumophila genome for exploitation of host cell functions and high genome plasticity.</title>
        <authorList>
            <person name="Cazalet C."/>
            <person name="Rusniok C."/>
            <person name="Brueggemann H."/>
            <person name="Zidane N."/>
            <person name="Magnier A."/>
            <person name="Ma L."/>
            <person name="Tichit M."/>
            <person name="Jarraud S."/>
            <person name="Bouchier C."/>
            <person name="Vandenesch F."/>
            <person name="Kunst F."/>
            <person name="Etienne J."/>
            <person name="Glaser P."/>
            <person name="Buchrieser C."/>
        </authorList>
    </citation>
    <scope>NUCLEOTIDE SEQUENCE [LARGE SCALE GENOMIC DNA]</scope>
    <source>
        <strain>Lens</strain>
    </source>
</reference>
<accession>Q5WX48</accession>
<dbReference type="EC" id="3.1.21.10" evidence="1"/>
<dbReference type="EMBL" id="CR628337">
    <property type="protein sequence ID" value="CAH15489.1"/>
    <property type="molecule type" value="Genomic_DNA"/>
</dbReference>
<dbReference type="RefSeq" id="WP_011215334.1">
    <property type="nucleotide sequence ID" value="NC_006369.1"/>
</dbReference>
<dbReference type="SMR" id="Q5WX48"/>
<dbReference type="KEGG" id="lpf:lpl1250"/>
<dbReference type="LegioList" id="lpl1250"/>
<dbReference type="HOGENOM" id="CLU_091257_2_1_6"/>
<dbReference type="Proteomes" id="UP000002517">
    <property type="component" value="Chromosome"/>
</dbReference>
<dbReference type="GO" id="GO:0005737">
    <property type="term" value="C:cytoplasm"/>
    <property type="evidence" value="ECO:0007669"/>
    <property type="project" value="UniProtKB-SubCell"/>
</dbReference>
<dbReference type="GO" id="GO:0048476">
    <property type="term" value="C:Holliday junction resolvase complex"/>
    <property type="evidence" value="ECO:0007669"/>
    <property type="project" value="UniProtKB-UniRule"/>
</dbReference>
<dbReference type="GO" id="GO:0008821">
    <property type="term" value="F:crossover junction DNA endonuclease activity"/>
    <property type="evidence" value="ECO:0007669"/>
    <property type="project" value="UniProtKB-UniRule"/>
</dbReference>
<dbReference type="GO" id="GO:0003677">
    <property type="term" value="F:DNA binding"/>
    <property type="evidence" value="ECO:0007669"/>
    <property type="project" value="UniProtKB-KW"/>
</dbReference>
<dbReference type="GO" id="GO:0000287">
    <property type="term" value="F:magnesium ion binding"/>
    <property type="evidence" value="ECO:0007669"/>
    <property type="project" value="UniProtKB-UniRule"/>
</dbReference>
<dbReference type="GO" id="GO:0006310">
    <property type="term" value="P:DNA recombination"/>
    <property type="evidence" value="ECO:0007669"/>
    <property type="project" value="UniProtKB-UniRule"/>
</dbReference>
<dbReference type="GO" id="GO:0006281">
    <property type="term" value="P:DNA repair"/>
    <property type="evidence" value="ECO:0007669"/>
    <property type="project" value="UniProtKB-UniRule"/>
</dbReference>
<dbReference type="CDD" id="cd16962">
    <property type="entry name" value="RuvC"/>
    <property type="match status" value="1"/>
</dbReference>
<dbReference type="FunFam" id="3.30.420.10:FF:000002">
    <property type="entry name" value="Crossover junction endodeoxyribonuclease RuvC"/>
    <property type="match status" value="1"/>
</dbReference>
<dbReference type="Gene3D" id="3.30.420.10">
    <property type="entry name" value="Ribonuclease H-like superfamily/Ribonuclease H"/>
    <property type="match status" value="1"/>
</dbReference>
<dbReference type="HAMAP" id="MF_00034">
    <property type="entry name" value="RuvC"/>
    <property type="match status" value="1"/>
</dbReference>
<dbReference type="InterPro" id="IPR012337">
    <property type="entry name" value="RNaseH-like_sf"/>
</dbReference>
<dbReference type="InterPro" id="IPR036397">
    <property type="entry name" value="RNaseH_sf"/>
</dbReference>
<dbReference type="InterPro" id="IPR020563">
    <property type="entry name" value="X-over_junc_endoDNase_Mg_BS"/>
</dbReference>
<dbReference type="InterPro" id="IPR002176">
    <property type="entry name" value="X-over_junc_endoDNase_RuvC"/>
</dbReference>
<dbReference type="NCBIfam" id="NF000711">
    <property type="entry name" value="PRK00039.2-1"/>
    <property type="match status" value="1"/>
</dbReference>
<dbReference type="NCBIfam" id="TIGR00228">
    <property type="entry name" value="ruvC"/>
    <property type="match status" value="1"/>
</dbReference>
<dbReference type="PANTHER" id="PTHR30194">
    <property type="entry name" value="CROSSOVER JUNCTION ENDODEOXYRIBONUCLEASE RUVC"/>
    <property type="match status" value="1"/>
</dbReference>
<dbReference type="PANTHER" id="PTHR30194:SF3">
    <property type="entry name" value="CROSSOVER JUNCTION ENDODEOXYRIBONUCLEASE RUVC"/>
    <property type="match status" value="1"/>
</dbReference>
<dbReference type="Pfam" id="PF02075">
    <property type="entry name" value="RuvC"/>
    <property type="match status" value="1"/>
</dbReference>
<dbReference type="PRINTS" id="PR00696">
    <property type="entry name" value="RSOLVASERUVC"/>
</dbReference>
<dbReference type="SUPFAM" id="SSF53098">
    <property type="entry name" value="Ribonuclease H-like"/>
    <property type="match status" value="1"/>
</dbReference>
<dbReference type="PROSITE" id="PS01321">
    <property type="entry name" value="RUVC"/>
    <property type="match status" value="1"/>
</dbReference>
<proteinExistence type="inferred from homology"/>